<dbReference type="EMBL" id="CP001146">
    <property type="protein sequence ID" value="ACI19715.1"/>
    <property type="molecule type" value="Genomic_DNA"/>
</dbReference>
<dbReference type="RefSeq" id="WP_012548347.1">
    <property type="nucleotide sequence ID" value="NC_011297.1"/>
</dbReference>
<dbReference type="SMR" id="B5YER8"/>
<dbReference type="STRING" id="309799.DICTH_1197"/>
<dbReference type="PaxDb" id="309799-DICTH_1197"/>
<dbReference type="KEGG" id="dth:DICTH_1197"/>
<dbReference type="eggNOG" id="COG0291">
    <property type="taxonomic scope" value="Bacteria"/>
</dbReference>
<dbReference type="HOGENOM" id="CLU_169643_4_3_0"/>
<dbReference type="OrthoDB" id="47476at2"/>
<dbReference type="Proteomes" id="UP000001733">
    <property type="component" value="Chromosome"/>
</dbReference>
<dbReference type="GO" id="GO:0022625">
    <property type="term" value="C:cytosolic large ribosomal subunit"/>
    <property type="evidence" value="ECO:0007669"/>
    <property type="project" value="TreeGrafter"/>
</dbReference>
<dbReference type="GO" id="GO:0003735">
    <property type="term" value="F:structural constituent of ribosome"/>
    <property type="evidence" value="ECO:0007669"/>
    <property type="project" value="InterPro"/>
</dbReference>
<dbReference type="GO" id="GO:0006412">
    <property type="term" value="P:translation"/>
    <property type="evidence" value="ECO:0007669"/>
    <property type="project" value="UniProtKB-UniRule"/>
</dbReference>
<dbReference type="FunFam" id="4.10.410.60:FF:000001">
    <property type="entry name" value="50S ribosomal protein L35"/>
    <property type="match status" value="1"/>
</dbReference>
<dbReference type="Gene3D" id="4.10.410.60">
    <property type="match status" value="1"/>
</dbReference>
<dbReference type="HAMAP" id="MF_00514">
    <property type="entry name" value="Ribosomal_bL35"/>
    <property type="match status" value="1"/>
</dbReference>
<dbReference type="InterPro" id="IPR001706">
    <property type="entry name" value="Ribosomal_bL35"/>
</dbReference>
<dbReference type="InterPro" id="IPR021137">
    <property type="entry name" value="Ribosomal_bL35-like"/>
</dbReference>
<dbReference type="InterPro" id="IPR018265">
    <property type="entry name" value="Ribosomal_bL35_CS"/>
</dbReference>
<dbReference type="InterPro" id="IPR037229">
    <property type="entry name" value="Ribosomal_bL35_sf"/>
</dbReference>
<dbReference type="NCBIfam" id="TIGR00001">
    <property type="entry name" value="rpmI_bact"/>
    <property type="match status" value="1"/>
</dbReference>
<dbReference type="PANTHER" id="PTHR33343">
    <property type="entry name" value="54S RIBOSOMAL PROTEIN BL35M"/>
    <property type="match status" value="1"/>
</dbReference>
<dbReference type="PANTHER" id="PTHR33343:SF1">
    <property type="entry name" value="LARGE RIBOSOMAL SUBUNIT PROTEIN BL35M"/>
    <property type="match status" value="1"/>
</dbReference>
<dbReference type="Pfam" id="PF01632">
    <property type="entry name" value="Ribosomal_L35p"/>
    <property type="match status" value="1"/>
</dbReference>
<dbReference type="PRINTS" id="PR00064">
    <property type="entry name" value="RIBOSOMALL35"/>
</dbReference>
<dbReference type="SUPFAM" id="SSF143034">
    <property type="entry name" value="L35p-like"/>
    <property type="match status" value="1"/>
</dbReference>
<dbReference type="PROSITE" id="PS00936">
    <property type="entry name" value="RIBOSOMAL_L35"/>
    <property type="match status" value="1"/>
</dbReference>
<name>RL35_DICT6</name>
<sequence length="66" mass="7674">MSKLKTRSSAAKRFKVTATGKILHKKAGKRHNLSKKSKARKRRLDIPGEIKSVDRWKVERMLPYNL</sequence>
<accession>B5YER8</accession>
<protein>
    <recommendedName>
        <fullName evidence="1">Large ribosomal subunit protein bL35</fullName>
    </recommendedName>
    <alternativeName>
        <fullName evidence="3">50S ribosomal protein L35</fullName>
    </alternativeName>
</protein>
<reference key="1">
    <citation type="journal article" date="2014" name="Genome Announc.">
        <title>Complete Genome Sequence of the Extreme Thermophile Dictyoglomus thermophilum H-6-12.</title>
        <authorList>
            <person name="Coil D.A."/>
            <person name="Badger J.H."/>
            <person name="Forberger H.C."/>
            <person name="Riggs F."/>
            <person name="Madupu R."/>
            <person name="Fedorova N."/>
            <person name="Ward N."/>
            <person name="Robb F.T."/>
            <person name="Eisen J.A."/>
        </authorList>
    </citation>
    <scope>NUCLEOTIDE SEQUENCE [LARGE SCALE GENOMIC DNA]</scope>
    <source>
        <strain>ATCC 35947 / DSM 3960 / H-6-12</strain>
    </source>
</reference>
<proteinExistence type="inferred from homology"/>
<keyword id="KW-0687">Ribonucleoprotein</keyword>
<keyword id="KW-0689">Ribosomal protein</keyword>
<gene>
    <name evidence="1" type="primary">rpmI</name>
    <name type="ordered locus">DICTH_1197</name>
</gene>
<evidence type="ECO:0000255" key="1">
    <source>
        <dbReference type="HAMAP-Rule" id="MF_00514"/>
    </source>
</evidence>
<evidence type="ECO:0000256" key="2">
    <source>
        <dbReference type="SAM" id="MobiDB-lite"/>
    </source>
</evidence>
<evidence type="ECO:0000305" key="3"/>
<organism>
    <name type="scientific">Dictyoglomus thermophilum (strain ATCC 35947 / DSM 3960 / H-6-12)</name>
    <dbReference type="NCBI Taxonomy" id="309799"/>
    <lineage>
        <taxon>Bacteria</taxon>
        <taxon>Pseudomonadati</taxon>
        <taxon>Dictyoglomota</taxon>
        <taxon>Dictyoglomia</taxon>
        <taxon>Dictyoglomales</taxon>
        <taxon>Dictyoglomaceae</taxon>
        <taxon>Dictyoglomus</taxon>
    </lineage>
</organism>
<comment type="similarity">
    <text evidence="1">Belongs to the bacterial ribosomal protein bL35 family.</text>
</comment>
<feature type="chain" id="PRO_1000127341" description="Large ribosomal subunit protein bL35">
    <location>
        <begin position="1"/>
        <end position="66"/>
    </location>
</feature>
<feature type="region of interest" description="Disordered" evidence="2">
    <location>
        <begin position="24"/>
        <end position="44"/>
    </location>
</feature>
<feature type="compositionally biased region" description="Basic residues" evidence="2">
    <location>
        <begin position="24"/>
        <end position="43"/>
    </location>
</feature>